<comment type="function">
    <text evidence="1">Catalyzes two activities which are involved in the cyclic version of arginine biosynthesis: the synthesis of N-acetylglutamate from glutamate and acetyl-CoA as the acetyl donor, and of ornithine by transacetylation between N(2)-acetylornithine and glutamate.</text>
</comment>
<comment type="catalytic activity">
    <reaction evidence="1">
        <text>N(2)-acetyl-L-ornithine + L-glutamate = N-acetyl-L-glutamate + L-ornithine</text>
        <dbReference type="Rhea" id="RHEA:15349"/>
        <dbReference type="ChEBI" id="CHEBI:29985"/>
        <dbReference type="ChEBI" id="CHEBI:44337"/>
        <dbReference type="ChEBI" id="CHEBI:46911"/>
        <dbReference type="ChEBI" id="CHEBI:57805"/>
        <dbReference type="EC" id="2.3.1.35"/>
    </reaction>
</comment>
<comment type="catalytic activity">
    <reaction evidence="1">
        <text>L-glutamate + acetyl-CoA = N-acetyl-L-glutamate + CoA + H(+)</text>
        <dbReference type="Rhea" id="RHEA:24292"/>
        <dbReference type="ChEBI" id="CHEBI:15378"/>
        <dbReference type="ChEBI" id="CHEBI:29985"/>
        <dbReference type="ChEBI" id="CHEBI:44337"/>
        <dbReference type="ChEBI" id="CHEBI:57287"/>
        <dbReference type="ChEBI" id="CHEBI:57288"/>
        <dbReference type="EC" id="2.3.1.1"/>
    </reaction>
</comment>
<comment type="pathway">
    <text evidence="1">Amino-acid biosynthesis; L-arginine biosynthesis; L-ornithine and N-acetyl-L-glutamate from L-glutamate and N(2)-acetyl-L-ornithine (cyclic): step 1/1.</text>
</comment>
<comment type="pathway">
    <text evidence="1">Amino-acid biosynthesis; L-arginine biosynthesis; N(2)-acetyl-L-ornithine from L-glutamate: step 1/4.</text>
</comment>
<comment type="subunit">
    <text evidence="1">Heterotetramer of two alpha and two beta chains.</text>
</comment>
<comment type="subcellular location">
    <subcellularLocation>
        <location evidence="1">Cytoplasm</location>
    </subcellularLocation>
</comment>
<comment type="similarity">
    <text evidence="1">Belongs to the ArgJ family.</text>
</comment>
<feature type="chain" id="PRO_0000002131" description="Arginine biosynthesis bifunctional protein ArgJ alpha chain" evidence="1">
    <location>
        <begin position="1"/>
        <end position="192"/>
    </location>
</feature>
<feature type="chain" id="PRO_0000002132" description="Arginine biosynthesis bifunctional protein ArgJ beta chain" evidence="1">
    <location>
        <begin position="193"/>
        <end position="408"/>
    </location>
</feature>
<feature type="active site" description="Nucleophile" evidence="1">
    <location>
        <position position="193"/>
    </location>
</feature>
<feature type="binding site" evidence="1">
    <location>
        <position position="156"/>
    </location>
    <ligand>
        <name>substrate</name>
    </ligand>
</feature>
<feature type="binding site" evidence="1">
    <location>
        <position position="182"/>
    </location>
    <ligand>
        <name>substrate</name>
    </ligand>
</feature>
<feature type="binding site" evidence="1">
    <location>
        <position position="193"/>
    </location>
    <ligand>
        <name>substrate</name>
    </ligand>
</feature>
<feature type="binding site" evidence="1">
    <location>
        <position position="279"/>
    </location>
    <ligand>
        <name>substrate</name>
    </ligand>
</feature>
<feature type="binding site" evidence="1">
    <location>
        <position position="403"/>
    </location>
    <ligand>
        <name>substrate</name>
    </ligand>
</feature>
<feature type="binding site" evidence="1">
    <location>
        <position position="408"/>
    </location>
    <ligand>
        <name>substrate</name>
    </ligand>
</feature>
<feature type="site" description="Involved in the stabilization of negative charge on the oxyanion by the formation of the oxyanion hole" evidence="1">
    <location>
        <position position="119"/>
    </location>
</feature>
<feature type="site" description="Involved in the stabilization of negative charge on the oxyanion by the formation of the oxyanion hole" evidence="1">
    <location>
        <position position="120"/>
    </location>
</feature>
<feature type="site" description="Cleavage; by autolysis" evidence="1">
    <location>
        <begin position="192"/>
        <end position="193"/>
    </location>
</feature>
<accession>Q7W3S6</accession>
<reference key="1">
    <citation type="journal article" date="2003" name="Nat. Genet.">
        <title>Comparative analysis of the genome sequences of Bordetella pertussis, Bordetella parapertussis and Bordetella bronchiseptica.</title>
        <authorList>
            <person name="Parkhill J."/>
            <person name="Sebaihia M."/>
            <person name="Preston A."/>
            <person name="Murphy L.D."/>
            <person name="Thomson N.R."/>
            <person name="Harris D.E."/>
            <person name="Holden M.T.G."/>
            <person name="Churcher C.M."/>
            <person name="Bentley S.D."/>
            <person name="Mungall K.L."/>
            <person name="Cerdeno-Tarraga A.-M."/>
            <person name="Temple L."/>
            <person name="James K.D."/>
            <person name="Harris B."/>
            <person name="Quail M.A."/>
            <person name="Achtman M."/>
            <person name="Atkin R."/>
            <person name="Baker S."/>
            <person name="Basham D."/>
            <person name="Bason N."/>
            <person name="Cherevach I."/>
            <person name="Chillingworth T."/>
            <person name="Collins M."/>
            <person name="Cronin A."/>
            <person name="Davis P."/>
            <person name="Doggett J."/>
            <person name="Feltwell T."/>
            <person name="Goble A."/>
            <person name="Hamlin N."/>
            <person name="Hauser H."/>
            <person name="Holroyd S."/>
            <person name="Jagels K."/>
            <person name="Leather S."/>
            <person name="Moule S."/>
            <person name="Norberczak H."/>
            <person name="O'Neil S."/>
            <person name="Ormond D."/>
            <person name="Price C."/>
            <person name="Rabbinowitsch E."/>
            <person name="Rutter S."/>
            <person name="Sanders M."/>
            <person name="Saunders D."/>
            <person name="Seeger K."/>
            <person name="Sharp S."/>
            <person name="Simmonds M."/>
            <person name="Skelton J."/>
            <person name="Squares R."/>
            <person name="Squares S."/>
            <person name="Stevens K."/>
            <person name="Unwin L."/>
            <person name="Whitehead S."/>
            <person name="Barrell B.G."/>
            <person name="Maskell D.J."/>
        </authorList>
    </citation>
    <scope>NUCLEOTIDE SEQUENCE [LARGE SCALE GENOMIC DNA]</scope>
    <source>
        <strain>12822 / ATCC BAA-587 / NCTC 13253</strain>
    </source>
</reference>
<keyword id="KW-0012">Acyltransferase</keyword>
<keyword id="KW-0028">Amino-acid biosynthesis</keyword>
<keyword id="KW-0055">Arginine biosynthesis</keyword>
<keyword id="KW-0068">Autocatalytic cleavage</keyword>
<keyword id="KW-0963">Cytoplasm</keyword>
<keyword id="KW-0511">Multifunctional enzyme</keyword>
<keyword id="KW-0808">Transferase</keyword>
<proteinExistence type="inferred from homology"/>
<sequence length="408" mass="42686">MAVNLQIPSESEILPVAGVEIGVAEAGIRKAGRRDLTVFRLAPGSAVAGVFTRNRFRAAPVQVCEAHLAQGGPIRALVVNTGNANAGTGAPGLKNAQDTCAALGKLLDVPAEQILPFSTGVILEPLPMDRLTAGLPAAVADLRADGWYGAAHGIMTTDTLPKIHSRRVDIGGKTVTITGISKGAGMIRPNMATMLGFLATDAGIAQPLLRQLAIELADVSFNRITVDGDTSTNDSFILIATGQAGVTVDSAGDAAYAALRDALAAAATDLAQKIVRDAEGATKFMTIRVEEAGNTEEALKVAYAVAHSPLVKTAFFASDPNLGRILAAIGYAGIDDLDVSRLRLWLGDVLVAVDGGRNPDYQEADGQRVMKQAEILVRIALGRGQVADTVYTCDFSHEYVTINADYRS</sequence>
<name>ARGJ_BORPA</name>
<gene>
    <name evidence="1" type="primary">argJ</name>
    <name type="ordered locus">BPP3953</name>
</gene>
<organism>
    <name type="scientific">Bordetella parapertussis (strain 12822 / ATCC BAA-587 / NCTC 13253)</name>
    <dbReference type="NCBI Taxonomy" id="257311"/>
    <lineage>
        <taxon>Bacteria</taxon>
        <taxon>Pseudomonadati</taxon>
        <taxon>Pseudomonadota</taxon>
        <taxon>Betaproteobacteria</taxon>
        <taxon>Burkholderiales</taxon>
        <taxon>Alcaligenaceae</taxon>
        <taxon>Bordetella</taxon>
    </lineage>
</organism>
<evidence type="ECO:0000255" key="1">
    <source>
        <dbReference type="HAMAP-Rule" id="MF_01106"/>
    </source>
</evidence>
<protein>
    <recommendedName>
        <fullName evidence="1">Arginine biosynthesis bifunctional protein ArgJ</fullName>
    </recommendedName>
    <domain>
        <recommendedName>
            <fullName evidence="1">Glutamate N-acetyltransferase</fullName>
            <ecNumber evidence="1">2.3.1.35</ecNumber>
        </recommendedName>
        <alternativeName>
            <fullName evidence="1">Ornithine acetyltransferase</fullName>
            <shortName evidence="1">OATase</shortName>
        </alternativeName>
        <alternativeName>
            <fullName evidence="1">Ornithine transacetylase</fullName>
        </alternativeName>
    </domain>
    <domain>
        <recommendedName>
            <fullName evidence="1">Amino-acid acetyltransferase</fullName>
            <ecNumber evidence="1">2.3.1.1</ecNumber>
        </recommendedName>
        <alternativeName>
            <fullName evidence="1">N-acetylglutamate synthase</fullName>
            <shortName evidence="1">AGSase</shortName>
        </alternativeName>
    </domain>
    <component>
        <recommendedName>
            <fullName evidence="1">Arginine biosynthesis bifunctional protein ArgJ alpha chain</fullName>
        </recommendedName>
    </component>
    <component>
        <recommendedName>
            <fullName evidence="1">Arginine biosynthesis bifunctional protein ArgJ beta chain</fullName>
        </recommendedName>
    </component>
</protein>
<dbReference type="EC" id="2.3.1.35" evidence="1"/>
<dbReference type="EC" id="2.3.1.1" evidence="1"/>
<dbReference type="EMBL" id="BX640435">
    <property type="protein sequence ID" value="CAE39236.1"/>
    <property type="molecule type" value="Genomic_DNA"/>
</dbReference>
<dbReference type="RefSeq" id="WP_003815023.1">
    <property type="nucleotide sequence ID" value="NC_002928.3"/>
</dbReference>
<dbReference type="SMR" id="Q7W3S6"/>
<dbReference type="MEROPS" id="T05.001"/>
<dbReference type="GeneID" id="93205752"/>
<dbReference type="KEGG" id="bpa:BPP3953"/>
<dbReference type="HOGENOM" id="CLU_027172_1_0_4"/>
<dbReference type="UniPathway" id="UPA00068">
    <property type="reaction ID" value="UER00106"/>
</dbReference>
<dbReference type="UniPathway" id="UPA00068">
    <property type="reaction ID" value="UER00111"/>
</dbReference>
<dbReference type="Proteomes" id="UP000001421">
    <property type="component" value="Chromosome"/>
</dbReference>
<dbReference type="GO" id="GO:0005737">
    <property type="term" value="C:cytoplasm"/>
    <property type="evidence" value="ECO:0007669"/>
    <property type="project" value="UniProtKB-SubCell"/>
</dbReference>
<dbReference type="GO" id="GO:0004358">
    <property type="term" value="F:glutamate N-acetyltransferase activity"/>
    <property type="evidence" value="ECO:0007669"/>
    <property type="project" value="UniProtKB-UniRule"/>
</dbReference>
<dbReference type="GO" id="GO:0004042">
    <property type="term" value="F:L-glutamate N-acetyltransferase activity"/>
    <property type="evidence" value="ECO:0007669"/>
    <property type="project" value="UniProtKB-UniRule"/>
</dbReference>
<dbReference type="GO" id="GO:0006526">
    <property type="term" value="P:L-arginine biosynthetic process"/>
    <property type="evidence" value="ECO:0007669"/>
    <property type="project" value="UniProtKB-UniRule"/>
</dbReference>
<dbReference type="GO" id="GO:0006592">
    <property type="term" value="P:ornithine biosynthetic process"/>
    <property type="evidence" value="ECO:0007669"/>
    <property type="project" value="TreeGrafter"/>
</dbReference>
<dbReference type="CDD" id="cd02152">
    <property type="entry name" value="OAT"/>
    <property type="match status" value="1"/>
</dbReference>
<dbReference type="FunFam" id="3.60.70.12:FF:000001">
    <property type="entry name" value="Arginine biosynthesis bifunctional protein ArgJ, chloroplastic"/>
    <property type="match status" value="1"/>
</dbReference>
<dbReference type="Gene3D" id="3.30.2330.10">
    <property type="entry name" value="arginine biosynthesis bifunctional protein suprefamily"/>
    <property type="match status" value="1"/>
</dbReference>
<dbReference type="Gene3D" id="3.10.20.340">
    <property type="entry name" value="ArgJ beta chain, C-terminal domain"/>
    <property type="match status" value="1"/>
</dbReference>
<dbReference type="Gene3D" id="3.60.70.12">
    <property type="entry name" value="L-amino peptidase D-ALA esterase/amidase"/>
    <property type="match status" value="1"/>
</dbReference>
<dbReference type="HAMAP" id="MF_01106">
    <property type="entry name" value="ArgJ"/>
    <property type="match status" value="1"/>
</dbReference>
<dbReference type="InterPro" id="IPR002813">
    <property type="entry name" value="Arg_biosynth_ArgJ"/>
</dbReference>
<dbReference type="InterPro" id="IPR016117">
    <property type="entry name" value="ArgJ-like_dom_sf"/>
</dbReference>
<dbReference type="InterPro" id="IPR042195">
    <property type="entry name" value="ArgJ_beta_C"/>
</dbReference>
<dbReference type="NCBIfam" id="TIGR00120">
    <property type="entry name" value="ArgJ"/>
    <property type="match status" value="1"/>
</dbReference>
<dbReference type="NCBIfam" id="NF003802">
    <property type="entry name" value="PRK05388.1"/>
    <property type="match status" value="1"/>
</dbReference>
<dbReference type="PANTHER" id="PTHR23100">
    <property type="entry name" value="ARGININE BIOSYNTHESIS BIFUNCTIONAL PROTEIN ARGJ"/>
    <property type="match status" value="1"/>
</dbReference>
<dbReference type="PANTHER" id="PTHR23100:SF0">
    <property type="entry name" value="ARGININE BIOSYNTHESIS BIFUNCTIONAL PROTEIN ARGJ, MITOCHONDRIAL"/>
    <property type="match status" value="1"/>
</dbReference>
<dbReference type="Pfam" id="PF01960">
    <property type="entry name" value="ArgJ"/>
    <property type="match status" value="1"/>
</dbReference>
<dbReference type="SUPFAM" id="SSF56266">
    <property type="entry name" value="DmpA/ArgJ-like"/>
    <property type="match status" value="1"/>
</dbReference>